<accession>P56655</accession>
<accession>B2RWV4</accession>
<accession>F8VPK7</accession>
<dbReference type="EC" id="1.14.14.1" evidence="3"/>
<dbReference type="EMBL" id="AF047725">
    <property type="protein sequence ID" value="AAD13720.1"/>
    <property type="molecule type" value="mRNA"/>
</dbReference>
<dbReference type="EMBL" id="AC139233">
    <property type="status" value="NOT_ANNOTATED_CDS"/>
    <property type="molecule type" value="Genomic_DNA"/>
</dbReference>
<dbReference type="EMBL" id="BC150721">
    <property type="protein sequence ID" value="AAI50722.1"/>
    <property type="molecule type" value="mRNA"/>
</dbReference>
<dbReference type="CCDS" id="CCDS29794.1"/>
<dbReference type="RefSeq" id="NP_034132.2">
    <property type="nucleotide sequence ID" value="NM_010002.4"/>
</dbReference>
<dbReference type="SMR" id="P56655"/>
<dbReference type="FunCoup" id="P56655">
    <property type="interactions" value="916"/>
</dbReference>
<dbReference type="STRING" id="10090.ENSMUSP00000044722"/>
<dbReference type="SwissLipids" id="SLP:000001669"/>
<dbReference type="GlyGen" id="P56655">
    <property type="glycosylation" value="1 site"/>
</dbReference>
<dbReference type="iPTMnet" id="P56655"/>
<dbReference type="PhosphoSitePlus" id="P56655"/>
<dbReference type="jPOST" id="P56655"/>
<dbReference type="PaxDb" id="10090-ENSMUSP00000044722"/>
<dbReference type="PeptideAtlas" id="P56655"/>
<dbReference type="ProteomicsDB" id="283436"/>
<dbReference type="DNASU" id="13097"/>
<dbReference type="Ensembl" id="ENSMUST00000035488.3">
    <property type="protein sequence ID" value="ENSMUSP00000044722.3"/>
    <property type="gene ID" value="ENSMUSG00000032808.3"/>
</dbReference>
<dbReference type="GeneID" id="13097"/>
<dbReference type="KEGG" id="mmu:13097"/>
<dbReference type="UCSC" id="uc008hka.1">
    <property type="organism name" value="mouse"/>
</dbReference>
<dbReference type="AGR" id="MGI:1306819"/>
<dbReference type="CTD" id="13097"/>
<dbReference type="MGI" id="MGI:1306819">
    <property type="gene designation" value="Cyp2c38"/>
</dbReference>
<dbReference type="VEuPathDB" id="HostDB:ENSMUSG00000032808"/>
<dbReference type="eggNOG" id="KOG0156">
    <property type="taxonomic scope" value="Eukaryota"/>
</dbReference>
<dbReference type="GeneTree" id="ENSGT00940000155736"/>
<dbReference type="HOGENOM" id="CLU_001570_22_0_1"/>
<dbReference type="InParanoid" id="P56655"/>
<dbReference type="OMA" id="WHINREP"/>
<dbReference type="OrthoDB" id="1103324at2759"/>
<dbReference type="PhylomeDB" id="P56655"/>
<dbReference type="TreeFam" id="TF352043"/>
<dbReference type="UniPathway" id="UPA00383"/>
<dbReference type="BioGRID-ORCS" id="13097">
    <property type="hits" value="2 hits in 79 CRISPR screens"/>
</dbReference>
<dbReference type="ChiTaRS" id="Cyp2c38">
    <property type="organism name" value="mouse"/>
</dbReference>
<dbReference type="PRO" id="PR:P56655"/>
<dbReference type="Proteomes" id="UP000000589">
    <property type="component" value="Chromosome 19"/>
</dbReference>
<dbReference type="RNAct" id="P56655">
    <property type="molecule type" value="protein"/>
</dbReference>
<dbReference type="Bgee" id="ENSMUSG00000032808">
    <property type="expression patterns" value="Expressed in liver and 8 other cell types or tissues"/>
</dbReference>
<dbReference type="GO" id="GO:0005789">
    <property type="term" value="C:endoplasmic reticulum membrane"/>
    <property type="evidence" value="ECO:0007669"/>
    <property type="project" value="UniProtKB-SubCell"/>
</dbReference>
<dbReference type="GO" id="GO:0008405">
    <property type="term" value="F:arachidonate 11,12-epoxygenase activity"/>
    <property type="evidence" value="ECO:0000314"/>
    <property type="project" value="UniProtKB"/>
</dbReference>
<dbReference type="GO" id="GO:0008404">
    <property type="term" value="F:arachidonate 14,15-epoxygenase activity"/>
    <property type="evidence" value="ECO:0000314"/>
    <property type="project" value="UniProtKB"/>
</dbReference>
<dbReference type="GO" id="GO:0020037">
    <property type="term" value="F:heme binding"/>
    <property type="evidence" value="ECO:0007669"/>
    <property type="project" value="InterPro"/>
</dbReference>
<dbReference type="GO" id="GO:0005506">
    <property type="term" value="F:iron ion binding"/>
    <property type="evidence" value="ECO:0007669"/>
    <property type="project" value="InterPro"/>
</dbReference>
<dbReference type="GO" id="GO:0016712">
    <property type="term" value="F:oxidoreductase activity, acting on paired donors, with incorporation or reduction of molecular oxygen, reduced flavin or flavoprotein as one donor, and incorporation of one atom of oxygen"/>
    <property type="evidence" value="ECO:0007669"/>
    <property type="project" value="UniProtKB-EC"/>
</dbReference>
<dbReference type="GO" id="GO:0019369">
    <property type="term" value="P:arachidonate metabolic process"/>
    <property type="evidence" value="ECO:0000314"/>
    <property type="project" value="UniProtKB"/>
</dbReference>
<dbReference type="CDD" id="cd20665">
    <property type="entry name" value="CYP2C-like"/>
    <property type="match status" value="1"/>
</dbReference>
<dbReference type="FunFam" id="1.10.630.10:FF:000299">
    <property type="entry name" value="Cytochrome P450 2C9"/>
    <property type="match status" value="1"/>
</dbReference>
<dbReference type="Gene3D" id="1.10.630.10">
    <property type="entry name" value="Cytochrome P450"/>
    <property type="match status" value="1"/>
</dbReference>
<dbReference type="InterPro" id="IPR001128">
    <property type="entry name" value="Cyt_P450"/>
</dbReference>
<dbReference type="InterPro" id="IPR017972">
    <property type="entry name" value="Cyt_P450_CS"/>
</dbReference>
<dbReference type="InterPro" id="IPR002401">
    <property type="entry name" value="Cyt_P450_E_grp-I"/>
</dbReference>
<dbReference type="InterPro" id="IPR036396">
    <property type="entry name" value="Cyt_P450_sf"/>
</dbReference>
<dbReference type="InterPro" id="IPR050182">
    <property type="entry name" value="Cytochrome_P450_fam2"/>
</dbReference>
<dbReference type="PANTHER" id="PTHR24300:SF384">
    <property type="entry name" value="CYTOCHROME P450 2C29-RELATED"/>
    <property type="match status" value="1"/>
</dbReference>
<dbReference type="PANTHER" id="PTHR24300">
    <property type="entry name" value="CYTOCHROME P450 508A4-RELATED"/>
    <property type="match status" value="1"/>
</dbReference>
<dbReference type="Pfam" id="PF00067">
    <property type="entry name" value="p450"/>
    <property type="match status" value="1"/>
</dbReference>
<dbReference type="PRINTS" id="PR00463">
    <property type="entry name" value="EP450I"/>
</dbReference>
<dbReference type="PRINTS" id="PR00385">
    <property type="entry name" value="P450"/>
</dbReference>
<dbReference type="SUPFAM" id="SSF48264">
    <property type="entry name" value="Cytochrome P450"/>
    <property type="match status" value="1"/>
</dbReference>
<dbReference type="PROSITE" id="PS00086">
    <property type="entry name" value="CYTOCHROME_P450"/>
    <property type="match status" value="1"/>
</dbReference>
<feature type="signal peptide" evidence="2">
    <location>
        <begin position="1"/>
        <end position="20"/>
    </location>
</feature>
<feature type="chain" id="PRO_0000051721" description="Cytochrome P450 2C38" evidence="2">
    <location>
        <begin position="21"/>
        <end position="490"/>
    </location>
</feature>
<feature type="binding site" description="axial binding residue" evidence="1">
    <location>
        <position position="435"/>
    </location>
    <ligand>
        <name>heme</name>
        <dbReference type="ChEBI" id="CHEBI:30413"/>
    </ligand>
    <ligandPart>
        <name>Fe</name>
        <dbReference type="ChEBI" id="CHEBI:18248"/>
    </ligandPart>
</feature>
<feature type="sequence conflict" description="In Ref. 1; AAD13720 and 3; AAI50722." evidence="5" ref="1 3">
    <original>T</original>
    <variation>A</variation>
    <location>
        <position position="60"/>
    </location>
</feature>
<feature type="sequence conflict" description="In Ref. 1; AAD13720 and 3; AAI50722." evidence="5" ref="1 3">
    <original>E</original>
    <variation>G</variation>
    <location>
        <position position="98"/>
    </location>
</feature>
<feature type="sequence conflict" description="In Ref. 1; AAD13720 and 3; AAI50722." evidence="5" ref="1 3">
    <original>R</original>
    <variation>H</variation>
    <location>
        <position position="125"/>
    </location>
</feature>
<feature type="sequence conflict" description="In Ref. 1; AAD13720 and 3; AAI50722." evidence="5" ref="1 3">
    <original>D</original>
    <variation>H</variation>
    <location>
        <position position="188"/>
    </location>
</feature>
<feature type="sequence conflict" description="In Ref. 1; AAD13720 and 3; AAI50722." evidence="5" ref="1 3">
    <original>E</original>
    <variation>A</variation>
    <location>
        <position position="253"/>
    </location>
</feature>
<feature type="sequence conflict" description="In Ref. 1; AAD13720 and 3; AAI50722." evidence="5" ref="1 3">
    <original>V</original>
    <variation>F</variation>
    <location>
        <position position="257"/>
    </location>
</feature>
<feature type="sequence conflict" description="In Ref. 1; AAD13720 and 3; AAI50722." evidence="5" ref="1 3">
    <original>R</original>
    <variation>H</variation>
    <location>
        <position position="344"/>
    </location>
</feature>
<feature type="sequence conflict" description="In Ref. 1; AAD13720 and 3; AAI50722." evidence="5" ref="1 3">
    <original>I</original>
    <variation>M</variation>
    <location>
        <position position="470"/>
    </location>
</feature>
<feature type="sequence conflict" description="In Ref. 1; AAD13720 and 3; AAI50722." evidence="5" ref="1 3">
    <original>T</original>
    <variation>A</variation>
    <location>
        <position position="478"/>
    </location>
</feature>
<evidence type="ECO:0000250" key="1"/>
<evidence type="ECO:0000255" key="2"/>
<evidence type="ECO:0000269" key="3">
    <source>
    </source>
</evidence>
<evidence type="ECO:0000303" key="4">
    <source>
    </source>
</evidence>
<evidence type="ECO:0000305" key="5"/>
<evidence type="ECO:0000305" key="6">
    <source>
    </source>
</evidence>
<evidence type="ECO:0000312" key="7">
    <source>
        <dbReference type="MGI" id="MGI:1306819"/>
    </source>
</evidence>
<reference key="1">
    <citation type="journal article" date="1998" name="Arch. Biochem. Biophys.">
        <title>Cloning and expression of murine CYP2Cs and their ability to metabolize arachidonic acid.</title>
        <authorList>
            <person name="Luo G."/>
            <person name="Zeldin D.C."/>
            <person name="Blaisdell J.A."/>
            <person name="Hodgson E."/>
            <person name="Goldstein J.A."/>
        </authorList>
    </citation>
    <scope>NUCLEOTIDE SEQUENCE [MRNA]</scope>
    <scope>FUNCTION</scope>
    <scope>CATALYTIC ACTIVITY</scope>
    <scope>TISSUE SPECIFICITY</scope>
    <scope>PATHWAY</scope>
    <source>
        <strain>CD-1</strain>
    </source>
</reference>
<reference key="2">
    <citation type="journal article" date="2009" name="PLoS Biol.">
        <title>Lineage-specific biology revealed by a finished genome assembly of the mouse.</title>
        <authorList>
            <person name="Church D.M."/>
            <person name="Goodstadt L."/>
            <person name="Hillier L.W."/>
            <person name="Zody M.C."/>
            <person name="Goldstein S."/>
            <person name="She X."/>
            <person name="Bult C.J."/>
            <person name="Agarwala R."/>
            <person name="Cherry J.L."/>
            <person name="DiCuccio M."/>
            <person name="Hlavina W."/>
            <person name="Kapustin Y."/>
            <person name="Meric P."/>
            <person name="Maglott D."/>
            <person name="Birtle Z."/>
            <person name="Marques A.C."/>
            <person name="Graves T."/>
            <person name="Zhou S."/>
            <person name="Teague B."/>
            <person name="Potamousis K."/>
            <person name="Churas C."/>
            <person name="Place M."/>
            <person name="Herschleb J."/>
            <person name="Runnheim R."/>
            <person name="Forrest D."/>
            <person name="Amos-Landgraf J."/>
            <person name="Schwartz D.C."/>
            <person name="Cheng Z."/>
            <person name="Lindblad-Toh K."/>
            <person name="Eichler E.E."/>
            <person name="Ponting C.P."/>
        </authorList>
    </citation>
    <scope>NUCLEOTIDE SEQUENCE [LARGE SCALE GENOMIC DNA]</scope>
    <source>
        <strain>C57BL/6J</strain>
    </source>
</reference>
<reference key="3">
    <citation type="journal article" date="2004" name="Genome Res.">
        <title>The status, quality, and expansion of the NIH full-length cDNA project: the Mammalian Gene Collection (MGC).</title>
        <authorList>
            <consortium name="The MGC Project Team"/>
        </authorList>
    </citation>
    <scope>NUCLEOTIDE SEQUENCE [LARGE SCALE MRNA]</scope>
    <source>
        <tissue>Brain</tissue>
    </source>
</reference>
<comment type="function">
    <text evidence="3">A cytochrome P450 monooxygenase that primarily catalyzes the epoxidation of 11,12 double bond of (5Z,8Z,11Z,14Z)-eicosatetraenoic acid (arachidonate) forming 11,12-epoxyeicosatrienoic acid (11,12-EET) regioisomer. Mechanistically, uses molecular oxygen inserting one oxygen atom into a substrate, and reducing the second into a water molecule, with two electrons provided by NADPH via cytochrome P450 reductase (CPR; NADPH--hemoprotein reductase).</text>
</comment>
<comment type="catalytic activity">
    <reaction evidence="3">
        <text>an organic molecule + reduced [NADPH--hemoprotein reductase] + O2 = an alcohol + oxidized [NADPH--hemoprotein reductase] + H2O + H(+)</text>
        <dbReference type="Rhea" id="RHEA:17149"/>
        <dbReference type="Rhea" id="RHEA-COMP:11964"/>
        <dbReference type="Rhea" id="RHEA-COMP:11965"/>
        <dbReference type="ChEBI" id="CHEBI:15377"/>
        <dbReference type="ChEBI" id="CHEBI:15378"/>
        <dbReference type="ChEBI" id="CHEBI:15379"/>
        <dbReference type="ChEBI" id="CHEBI:30879"/>
        <dbReference type="ChEBI" id="CHEBI:57618"/>
        <dbReference type="ChEBI" id="CHEBI:58210"/>
        <dbReference type="ChEBI" id="CHEBI:142491"/>
        <dbReference type="EC" id="1.14.14.1"/>
    </reaction>
    <physiologicalReaction direction="left-to-right" evidence="6">
        <dbReference type="Rhea" id="RHEA:17150"/>
    </physiologicalReaction>
</comment>
<comment type="catalytic activity">
    <reaction evidence="3">
        <text>(5Z,8Z,11Z,14Z)-eicosatetraenoate + reduced [NADPH--hemoprotein reductase] + O2 = 11,12-epoxy-(5Z,8Z,14Z)-eicosatrienoate + oxidized [NADPH--hemoprotein reductase] + H2O + H(+)</text>
        <dbReference type="Rhea" id="RHEA:51480"/>
        <dbReference type="Rhea" id="RHEA-COMP:11964"/>
        <dbReference type="Rhea" id="RHEA-COMP:11965"/>
        <dbReference type="ChEBI" id="CHEBI:15377"/>
        <dbReference type="ChEBI" id="CHEBI:15378"/>
        <dbReference type="ChEBI" id="CHEBI:15379"/>
        <dbReference type="ChEBI" id="CHEBI:32395"/>
        <dbReference type="ChEBI" id="CHEBI:57618"/>
        <dbReference type="ChEBI" id="CHEBI:58210"/>
        <dbReference type="ChEBI" id="CHEBI:76625"/>
    </reaction>
    <physiologicalReaction direction="left-to-right" evidence="6">
        <dbReference type="Rhea" id="RHEA:51481"/>
    </physiologicalReaction>
</comment>
<comment type="cofactor">
    <cofactor evidence="1">
        <name>heme</name>
        <dbReference type="ChEBI" id="CHEBI:30413"/>
    </cofactor>
</comment>
<comment type="pathway">
    <text evidence="6">Lipid metabolism; arachidonate metabolism.</text>
</comment>
<comment type="subcellular location">
    <subcellularLocation>
        <location>Endoplasmic reticulum membrane</location>
        <topology>Peripheral membrane protein</topology>
    </subcellularLocation>
    <subcellularLocation>
        <location>Microsome membrane</location>
        <topology>Peripheral membrane protein</topology>
    </subcellularLocation>
</comment>
<comment type="tissue specificity">
    <text evidence="3">Liver, brain, kidney, and intestine, with trace amounts in lung and heart.</text>
</comment>
<comment type="similarity">
    <text evidence="5">Belongs to the cytochrome P450 family.</text>
</comment>
<organism>
    <name type="scientific">Mus musculus</name>
    <name type="common">Mouse</name>
    <dbReference type="NCBI Taxonomy" id="10090"/>
    <lineage>
        <taxon>Eukaryota</taxon>
        <taxon>Metazoa</taxon>
        <taxon>Chordata</taxon>
        <taxon>Craniata</taxon>
        <taxon>Vertebrata</taxon>
        <taxon>Euteleostomi</taxon>
        <taxon>Mammalia</taxon>
        <taxon>Eutheria</taxon>
        <taxon>Euarchontoglires</taxon>
        <taxon>Glires</taxon>
        <taxon>Rodentia</taxon>
        <taxon>Myomorpha</taxon>
        <taxon>Muroidea</taxon>
        <taxon>Muridae</taxon>
        <taxon>Murinae</taxon>
        <taxon>Mus</taxon>
        <taxon>Mus</taxon>
    </lineage>
</organism>
<proteinExistence type="evidence at protein level"/>
<gene>
    <name evidence="4 7" type="primary">Cyp2c38</name>
</gene>
<protein>
    <recommendedName>
        <fullName>Cytochrome P450 2C38</fullName>
        <ecNumber evidence="3">1.14.14.1</ecNumber>
    </recommendedName>
    <alternativeName>
        <fullName>CYPIIC38</fullName>
    </alternativeName>
</protein>
<name>CP238_MOUSE</name>
<keyword id="KW-0256">Endoplasmic reticulum</keyword>
<keyword id="KW-0349">Heme</keyword>
<keyword id="KW-0408">Iron</keyword>
<keyword id="KW-0443">Lipid metabolism</keyword>
<keyword id="KW-0472">Membrane</keyword>
<keyword id="KW-0479">Metal-binding</keyword>
<keyword id="KW-0492">Microsome</keyword>
<keyword id="KW-0503">Monooxygenase</keyword>
<keyword id="KW-0560">Oxidoreductase</keyword>
<keyword id="KW-1185">Reference proteome</keyword>
<keyword id="KW-0732">Signal</keyword>
<sequence length="490" mass="56229">MDLVTFLVLTLSSLILLSLWRQRSRRGRLPPGPTPFPIIGNFLQIDVKNFNQSLTNFSKTYGPVFTLYLGSRPIVVLHGYEAVKEALIDHGEEFSGRENIPMSEKINNGLGITFSNGNSWKETRRFTLMTLRNLGMGKRNIEDRVREEAQCLVEELRKTKGSPCDPTFILSCAPCNVICSIIFQDRFDYKDKDFLMLMKKLNENVKILSSPWLQVCNNFPLLIDYCPGSHHKVLKNFKYIRSYLLEKVKEHQESLDVTNPRDFIDYFLIKQKQANHIEQAEYSLENLVCTINNLFAAGTETTSTTLRYALLLLMKYPDVTAKVQEEIDHVVGRHRSPCMQDRSRMPYTDAMIHEVQRFINLVPNNLPHAVTCDIKFRNYIIPKGTTVVTSLTSVLHDSKEFPNPEMFDPGHFLDANGNFKKSDYFMTFSAGKRVCAGEGLARMELFLILTTILQNFKLKSLVHPKDIDMIPFVNGLITLPPHYQLCFIPL</sequence>